<sequence length="160" mass="17983">MPSFDVVSEVDKHALTNAVDQAQRLITNRFDFKGVDAKFERKEFDITITADADMQLDQMLDVLRTAMAKNGIDVSCLDISSMKTSGKQVKRDMTVRTGIDKELAKKIVALVKEKKLKVQASIQGDQVRVTGKKRDDLQECIATLRAAELGMPMQFNNFRD</sequence>
<evidence type="ECO:0000255" key="1">
    <source>
        <dbReference type="HAMAP-Rule" id="MF_00632"/>
    </source>
</evidence>
<proteinExistence type="inferred from homology"/>
<keyword id="KW-0547">Nucleotide-binding</keyword>
<keyword id="KW-1185">Reference proteome</keyword>
<feature type="chain" id="PRO_1000130610" description="Nucleotide-binding protein CJA_2652">
    <location>
        <begin position="1"/>
        <end position="160"/>
    </location>
</feature>
<dbReference type="EMBL" id="CP000934">
    <property type="protein sequence ID" value="ACE85988.1"/>
    <property type="molecule type" value="Genomic_DNA"/>
</dbReference>
<dbReference type="RefSeq" id="WP_012488247.1">
    <property type="nucleotide sequence ID" value="NC_010995.1"/>
</dbReference>
<dbReference type="SMR" id="B3PLN2"/>
<dbReference type="STRING" id="498211.CJA_2652"/>
<dbReference type="KEGG" id="cja:CJA_2652"/>
<dbReference type="eggNOG" id="COG1666">
    <property type="taxonomic scope" value="Bacteria"/>
</dbReference>
<dbReference type="HOGENOM" id="CLU_099839_1_0_6"/>
<dbReference type="OrthoDB" id="9801447at2"/>
<dbReference type="Proteomes" id="UP000001036">
    <property type="component" value="Chromosome"/>
</dbReference>
<dbReference type="GO" id="GO:0005829">
    <property type="term" value="C:cytosol"/>
    <property type="evidence" value="ECO:0007669"/>
    <property type="project" value="TreeGrafter"/>
</dbReference>
<dbReference type="GO" id="GO:0000166">
    <property type="term" value="F:nucleotide binding"/>
    <property type="evidence" value="ECO:0007669"/>
    <property type="project" value="TreeGrafter"/>
</dbReference>
<dbReference type="CDD" id="cd11740">
    <property type="entry name" value="YajQ_like"/>
    <property type="match status" value="1"/>
</dbReference>
<dbReference type="FunFam" id="3.30.70.860:FF:000001">
    <property type="entry name" value="UPF0234 protein YajQ"/>
    <property type="match status" value="1"/>
</dbReference>
<dbReference type="Gene3D" id="3.30.70.860">
    <property type="match status" value="1"/>
</dbReference>
<dbReference type="Gene3D" id="3.30.70.990">
    <property type="entry name" value="YajQ-like, domain 2"/>
    <property type="match status" value="1"/>
</dbReference>
<dbReference type="HAMAP" id="MF_00632">
    <property type="entry name" value="YajQ"/>
    <property type="match status" value="1"/>
</dbReference>
<dbReference type="InterPro" id="IPR007551">
    <property type="entry name" value="DUF520"/>
</dbReference>
<dbReference type="InterPro" id="IPR035571">
    <property type="entry name" value="UPF0234-like_C"/>
</dbReference>
<dbReference type="InterPro" id="IPR035570">
    <property type="entry name" value="UPF0234_N"/>
</dbReference>
<dbReference type="InterPro" id="IPR036183">
    <property type="entry name" value="YajQ-like_sf"/>
</dbReference>
<dbReference type="NCBIfam" id="NF003819">
    <property type="entry name" value="PRK05412.1"/>
    <property type="match status" value="1"/>
</dbReference>
<dbReference type="PANTHER" id="PTHR30476">
    <property type="entry name" value="UPF0234 PROTEIN YAJQ"/>
    <property type="match status" value="1"/>
</dbReference>
<dbReference type="PANTHER" id="PTHR30476:SF0">
    <property type="entry name" value="UPF0234 PROTEIN YAJQ"/>
    <property type="match status" value="1"/>
</dbReference>
<dbReference type="Pfam" id="PF04461">
    <property type="entry name" value="DUF520"/>
    <property type="match status" value="1"/>
</dbReference>
<dbReference type="SUPFAM" id="SSF89963">
    <property type="entry name" value="YajQ-like"/>
    <property type="match status" value="2"/>
</dbReference>
<accession>B3PLN2</accession>
<comment type="function">
    <text evidence="1">Nucleotide-binding protein.</text>
</comment>
<comment type="similarity">
    <text evidence="1">Belongs to the YajQ family.</text>
</comment>
<organism>
    <name type="scientific">Cellvibrio japonicus (strain Ueda107)</name>
    <name type="common">Pseudomonas fluorescens subsp. cellulosa</name>
    <dbReference type="NCBI Taxonomy" id="498211"/>
    <lineage>
        <taxon>Bacteria</taxon>
        <taxon>Pseudomonadati</taxon>
        <taxon>Pseudomonadota</taxon>
        <taxon>Gammaproteobacteria</taxon>
        <taxon>Cellvibrionales</taxon>
        <taxon>Cellvibrionaceae</taxon>
        <taxon>Cellvibrio</taxon>
    </lineage>
</organism>
<gene>
    <name type="ordered locus">CJA_2652</name>
</gene>
<name>Y2652_CELJU</name>
<reference key="1">
    <citation type="journal article" date="2008" name="J. Bacteriol.">
        <title>Insights into plant cell wall degradation from the genome sequence of the soil bacterium Cellvibrio japonicus.</title>
        <authorList>
            <person name="DeBoy R.T."/>
            <person name="Mongodin E.F."/>
            <person name="Fouts D.E."/>
            <person name="Tailford L.E."/>
            <person name="Khouri H."/>
            <person name="Emerson J.B."/>
            <person name="Mohamoud Y."/>
            <person name="Watkins K."/>
            <person name="Henrissat B."/>
            <person name="Gilbert H.J."/>
            <person name="Nelson K.E."/>
        </authorList>
    </citation>
    <scope>NUCLEOTIDE SEQUENCE [LARGE SCALE GENOMIC DNA]</scope>
    <source>
        <strain>Ueda107</strain>
    </source>
</reference>
<protein>
    <recommendedName>
        <fullName evidence="1">Nucleotide-binding protein CJA_2652</fullName>
    </recommendedName>
</protein>